<comment type="similarity">
    <text evidence="1">Belongs to the UbiD family.</text>
</comment>
<keyword id="KW-1185">Reference proteome</keyword>
<protein>
    <recommendedName>
        <fullName>Uncharacterized protein HP_0396</fullName>
    </recommendedName>
</protein>
<accession>O25157</accession>
<feature type="chain" id="PRO_0000157374" description="Uncharacterized protein HP_0396">
    <location>
        <begin position="1"/>
        <end position="616"/>
    </location>
</feature>
<sequence length="616" mass="70844">MRDFLKLLKKHDELKIIDTPLEVDLEIAHLAYIEAKKPNGGKALLFTQPIRKEHDQIKTFGMPVLMNAFGSFKRLDLLLKTPIESLQQRMQAFLHFNAPKNFTEGLKVLKDLWDLRHIFPKKTTRPKDLIIKQDKEVNLLDLPVLKTWEKDGGAFITMGQVYTQSLDHQKKNLGMYRLQVYDKNHLGLHWQIHKDSQLFFHEYAKAKVKMPVSIAIGGDLLYTWCATAPLPYGIYELMLYGFMRGKKARVMPCLSNSLSVPSDCDIVIEGFVDCEKLELEGPFGDHTGYYTPIEPYPVLEVKTISYKKDSIYLATVVGKPPLEDKYMGYLTERLFLPLLQMNAPNLIEYYMPENGVFHNLILAKIHTRYNAHAKQVMHAFWGVGQMSFVKHAIFVNEDAPNLRDTNAIIEYILENFSKENALISQGVCDALDHASPEYAMGGKLGIDATSKSNTPYPTLLNDSALLALLQDKMQNIVLLKQYYPHTRNPICVISVEKKDKSVIELAKNLLGFEEHLRIVIFVEHASNDLNNPYMLLWRIVNNIDARRDILTSKHCFFIDATNKGVMDKHFREWPTETNCSMEVIENLKKKGLLKDFETLNQKFHLTHSFSTHKEDL</sequence>
<name>Y396_HELPY</name>
<proteinExistence type="inferred from homology"/>
<evidence type="ECO:0000305" key="1"/>
<dbReference type="EMBL" id="AE000511">
    <property type="protein sequence ID" value="AAD07460.1"/>
    <property type="molecule type" value="Genomic_DNA"/>
</dbReference>
<dbReference type="PIR" id="D64569">
    <property type="entry name" value="D64569"/>
</dbReference>
<dbReference type="RefSeq" id="NP_207194.1">
    <property type="nucleotide sequence ID" value="NC_000915.1"/>
</dbReference>
<dbReference type="RefSeq" id="WP_001204347.1">
    <property type="nucleotide sequence ID" value="NC_018939.1"/>
</dbReference>
<dbReference type="SMR" id="O25157"/>
<dbReference type="FunCoup" id="O25157">
    <property type="interactions" value="238"/>
</dbReference>
<dbReference type="IntAct" id="O25157">
    <property type="interactions" value="1"/>
</dbReference>
<dbReference type="MINT" id="O25157"/>
<dbReference type="STRING" id="85962.HP_0396"/>
<dbReference type="PaxDb" id="85962-C694_02010"/>
<dbReference type="EnsemblBacteria" id="AAD07460">
    <property type="protein sequence ID" value="AAD07460"/>
    <property type="gene ID" value="HP_0396"/>
</dbReference>
<dbReference type="KEGG" id="heo:C694_02010"/>
<dbReference type="KEGG" id="hpy:HP_0396"/>
<dbReference type="PATRIC" id="fig|85962.47.peg.420"/>
<dbReference type="eggNOG" id="COG0043">
    <property type="taxonomic scope" value="Bacteria"/>
</dbReference>
<dbReference type="InParanoid" id="O25157"/>
<dbReference type="OrthoDB" id="9809841at2"/>
<dbReference type="PhylomeDB" id="O25157"/>
<dbReference type="BioCyc" id="MetaCyc:HP_RS01950-MONOMER"/>
<dbReference type="Proteomes" id="UP000000429">
    <property type="component" value="Chromosome"/>
</dbReference>
<dbReference type="GO" id="GO:0005737">
    <property type="term" value="C:cytoplasm"/>
    <property type="evidence" value="ECO:0000318"/>
    <property type="project" value="GO_Central"/>
</dbReference>
<dbReference type="GO" id="GO:0005829">
    <property type="term" value="C:cytosol"/>
    <property type="evidence" value="ECO:0000318"/>
    <property type="project" value="GO_Central"/>
</dbReference>
<dbReference type="GO" id="GO:0008694">
    <property type="term" value="F:3-octaprenyl-4-hydroxybenzoate carboxy-lyase activity"/>
    <property type="evidence" value="ECO:0000318"/>
    <property type="project" value="GO_Central"/>
</dbReference>
<dbReference type="GO" id="GO:0006744">
    <property type="term" value="P:ubiquinone biosynthetic process"/>
    <property type="evidence" value="ECO:0000318"/>
    <property type="project" value="GO_Central"/>
</dbReference>
<dbReference type="Gene3D" id="3.40.1670.10">
    <property type="entry name" value="UbiD C-terminal domain-like"/>
    <property type="match status" value="1"/>
</dbReference>
<dbReference type="InterPro" id="IPR022390">
    <property type="entry name" value="HBDC"/>
</dbReference>
<dbReference type="InterPro" id="IPR002830">
    <property type="entry name" value="UbiD"/>
</dbReference>
<dbReference type="InterPro" id="IPR049381">
    <property type="entry name" value="UbiD-like_C"/>
</dbReference>
<dbReference type="InterPro" id="IPR049383">
    <property type="entry name" value="UbiD-like_N"/>
</dbReference>
<dbReference type="InterPro" id="IPR048304">
    <property type="entry name" value="UbiD_Rift_dom"/>
</dbReference>
<dbReference type="NCBIfam" id="TIGR03701">
    <property type="entry name" value="mena_SCO4490"/>
    <property type="match status" value="1"/>
</dbReference>
<dbReference type="NCBIfam" id="TIGR00148">
    <property type="entry name" value="UbiD family decarboxylase"/>
    <property type="match status" value="1"/>
</dbReference>
<dbReference type="PANTHER" id="PTHR30108">
    <property type="entry name" value="3-OCTAPRENYL-4-HYDROXYBENZOATE CARBOXY-LYASE-RELATED"/>
    <property type="match status" value="1"/>
</dbReference>
<dbReference type="PANTHER" id="PTHR30108:SF17">
    <property type="entry name" value="FERULIC ACID DECARBOXYLASE 1"/>
    <property type="match status" value="1"/>
</dbReference>
<dbReference type="Pfam" id="PF01977">
    <property type="entry name" value="UbiD"/>
    <property type="match status" value="1"/>
</dbReference>
<dbReference type="Pfam" id="PF20696">
    <property type="entry name" value="UbiD_C"/>
    <property type="match status" value="2"/>
</dbReference>
<dbReference type="Pfam" id="PF20695">
    <property type="entry name" value="UbiD_N"/>
    <property type="match status" value="1"/>
</dbReference>
<dbReference type="SUPFAM" id="SSF50475">
    <property type="entry name" value="FMN-binding split barrel"/>
    <property type="match status" value="1"/>
</dbReference>
<dbReference type="SUPFAM" id="SSF143968">
    <property type="entry name" value="UbiD C-terminal domain-like"/>
    <property type="match status" value="2"/>
</dbReference>
<reference key="1">
    <citation type="journal article" date="1997" name="Nature">
        <title>The complete genome sequence of the gastric pathogen Helicobacter pylori.</title>
        <authorList>
            <person name="Tomb J.-F."/>
            <person name="White O."/>
            <person name="Kerlavage A.R."/>
            <person name="Clayton R.A."/>
            <person name="Sutton G.G."/>
            <person name="Fleischmann R.D."/>
            <person name="Ketchum K.A."/>
            <person name="Klenk H.-P."/>
            <person name="Gill S.R."/>
            <person name="Dougherty B.A."/>
            <person name="Nelson K.E."/>
            <person name="Quackenbush J."/>
            <person name="Zhou L."/>
            <person name="Kirkness E.F."/>
            <person name="Peterson S.N."/>
            <person name="Loftus B.J."/>
            <person name="Richardson D.L."/>
            <person name="Dodson R.J."/>
            <person name="Khalak H.G."/>
            <person name="Glodek A."/>
            <person name="McKenney K."/>
            <person name="FitzGerald L.M."/>
            <person name="Lee N."/>
            <person name="Adams M.D."/>
            <person name="Hickey E.K."/>
            <person name="Berg D.E."/>
            <person name="Gocayne J.D."/>
            <person name="Utterback T.R."/>
            <person name="Peterson J.D."/>
            <person name="Kelley J.M."/>
            <person name="Cotton M.D."/>
            <person name="Weidman J.F."/>
            <person name="Fujii C."/>
            <person name="Bowman C."/>
            <person name="Watthey L."/>
            <person name="Wallin E."/>
            <person name="Hayes W.S."/>
            <person name="Borodovsky M."/>
            <person name="Karp P.D."/>
            <person name="Smith H.O."/>
            <person name="Fraser C.M."/>
            <person name="Venter J.C."/>
        </authorList>
    </citation>
    <scope>NUCLEOTIDE SEQUENCE [LARGE SCALE GENOMIC DNA]</scope>
    <source>
        <strain>ATCC 700392 / 26695</strain>
    </source>
</reference>
<organism>
    <name type="scientific">Helicobacter pylori (strain ATCC 700392 / 26695)</name>
    <name type="common">Campylobacter pylori</name>
    <dbReference type="NCBI Taxonomy" id="85962"/>
    <lineage>
        <taxon>Bacteria</taxon>
        <taxon>Pseudomonadati</taxon>
        <taxon>Campylobacterota</taxon>
        <taxon>Epsilonproteobacteria</taxon>
        <taxon>Campylobacterales</taxon>
        <taxon>Helicobacteraceae</taxon>
        <taxon>Helicobacter</taxon>
    </lineage>
</organism>
<gene>
    <name type="ordered locus">HP_0396</name>
</gene>